<protein>
    <recommendedName>
        <fullName>Glutathione peroxidase homolog BsaA</fullName>
    </recommendedName>
</protein>
<name>BSAA_STAAC</name>
<organism>
    <name type="scientific">Staphylococcus aureus (strain COL)</name>
    <dbReference type="NCBI Taxonomy" id="93062"/>
    <lineage>
        <taxon>Bacteria</taxon>
        <taxon>Bacillati</taxon>
        <taxon>Bacillota</taxon>
        <taxon>Bacilli</taxon>
        <taxon>Bacillales</taxon>
        <taxon>Staphylococcaceae</taxon>
        <taxon>Staphylococcus</taxon>
    </lineage>
</organism>
<proteinExistence type="inferred from homology"/>
<reference key="1">
    <citation type="journal article" date="2005" name="J. Bacteriol.">
        <title>Insights on evolution of virulence and resistance from the complete genome analysis of an early methicillin-resistant Staphylococcus aureus strain and a biofilm-producing methicillin-resistant Staphylococcus epidermidis strain.</title>
        <authorList>
            <person name="Gill S.R."/>
            <person name="Fouts D.E."/>
            <person name="Archer G.L."/>
            <person name="Mongodin E.F."/>
            <person name="DeBoy R.T."/>
            <person name="Ravel J."/>
            <person name="Paulsen I.T."/>
            <person name="Kolonay J.F."/>
            <person name="Brinkac L.M."/>
            <person name="Beanan M.J."/>
            <person name="Dodson R.J."/>
            <person name="Daugherty S.C."/>
            <person name="Madupu R."/>
            <person name="Angiuoli S.V."/>
            <person name="Durkin A.S."/>
            <person name="Haft D.H."/>
            <person name="Vamathevan J.J."/>
            <person name="Khouri H."/>
            <person name="Utterback T.R."/>
            <person name="Lee C."/>
            <person name="Dimitrov G."/>
            <person name="Jiang L."/>
            <person name="Qin H."/>
            <person name="Weidman J."/>
            <person name="Tran K."/>
            <person name="Kang K.H."/>
            <person name="Hance I.R."/>
            <person name="Nelson K.E."/>
            <person name="Fraser C.M."/>
        </authorList>
    </citation>
    <scope>NUCLEOTIDE SEQUENCE [LARGE SCALE GENOMIC DNA]</scope>
    <source>
        <strain>COL</strain>
    </source>
</reference>
<feature type="chain" id="PRO_0000066650" description="Glutathione peroxidase homolog BsaA">
    <location>
        <begin position="1"/>
        <end position="158"/>
    </location>
</feature>
<feature type="active site" evidence="1">
    <location>
        <position position="36"/>
    </location>
</feature>
<sequence length="158" mass="18118">METIYDFVVETNKGVTYKLDAYKGDVMLIVNTASECGFTSQFEGLQSLYEKYKDQGFVILGFPCNQFGGQEPGSGEEAAQNCKLNYGVTFPMHQKIDVKGEHQLPLFRYLTAAQHGFFNEKIKWNFTKFLVDREGNVVKRFAPQKKPVQIEREIEKLL</sequence>
<comment type="similarity">
    <text evidence="2">Belongs to the glutathione peroxidase family.</text>
</comment>
<evidence type="ECO:0000250" key="1"/>
<evidence type="ECO:0000305" key="2"/>
<gene>
    <name type="primary">bsaA</name>
    <name type="ordered locus">SACOL1325</name>
</gene>
<dbReference type="EMBL" id="CP000046">
    <property type="protein sequence ID" value="AAW38154.1"/>
    <property type="molecule type" value="Genomic_DNA"/>
</dbReference>
<dbReference type="RefSeq" id="WP_000448078.1">
    <property type="nucleotide sequence ID" value="NZ_JBGOFO010000002.1"/>
</dbReference>
<dbReference type="SMR" id="Q5HGC7"/>
<dbReference type="KEGG" id="sac:SACOL1325"/>
<dbReference type="HOGENOM" id="CLU_029507_2_2_9"/>
<dbReference type="Proteomes" id="UP000000530">
    <property type="component" value="Chromosome"/>
</dbReference>
<dbReference type="GO" id="GO:0004601">
    <property type="term" value="F:peroxidase activity"/>
    <property type="evidence" value="ECO:0007669"/>
    <property type="project" value="UniProtKB-KW"/>
</dbReference>
<dbReference type="GO" id="GO:0034599">
    <property type="term" value="P:cellular response to oxidative stress"/>
    <property type="evidence" value="ECO:0007669"/>
    <property type="project" value="TreeGrafter"/>
</dbReference>
<dbReference type="CDD" id="cd00340">
    <property type="entry name" value="GSH_Peroxidase"/>
    <property type="match status" value="1"/>
</dbReference>
<dbReference type="FunFam" id="3.40.30.10:FF:000010">
    <property type="entry name" value="Glutathione peroxidase"/>
    <property type="match status" value="1"/>
</dbReference>
<dbReference type="Gene3D" id="3.40.30.10">
    <property type="entry name" value="Glutaredoxin"/>
    <property type="match status" value="1"/>
</dbReference>
<dbReference type="InterPro" id="IPR000889">
    <property type="entry name" value="Glutathione_peroxidase"/>
</dbReference>
<dbReference type="InterPro" id="IPR029760">
    <property type="entry name" value="GPX_CS"/>
</dbReference>
<dbReference type="InterPro" id="IPR036249">
    <property type="entry name" value="Thioredoxin-like_sf"/>
</dbReference>
<dbReference type="PANTHER" id="PTHR11592">
    <property type="entry name" value="GLUTATHIONE PEROXIDASE"/>
    <property type="match status" value="1"/>
</dbReference>
<dbReference type="PANTHER" id="PTHR11592:SF78">
    <property type="entry name" value="GLUTATHIONE PEROXIDASE"/>
    <property type="match status" value="1"/>
</dbReference>
<dbReference type="Pfam" id="PF00255">
    <property type="entry name" value="GSHPx"/>
    <property type="match status" value="1"/>
</dbReference>
<dbReference type="PIRSF" id="PIRSF000303">
    <property type="entry name" value="Glutathion_perox"/>
    <property type="match status" value="1"/>
</dbReference>
<dbReference type="PRINTS" id="PR01011">
    <property type="entry name" value="GLUTPROXDASE"/>
</dbReference>
<dbReference type="SUPFAM" id="SSF52833">
    <property type="entry name" value="Thioredoxin-like"/>
    <property type="match status" value="1"/>
</dbReference>
<dbReference type="PROSITE" id="PS00763">
    <property type="entry name" value="GLUTATHIONE_PEROXID_2"/>
    <property type="match status" value="1"/>
</dbReference>
<dbReference type="PROSITE" id="PS51355">
    <property type="entry name" value="GLUTATHIONE_PEROXID_3"/>
    <property type="match status" value="1"/>
</dbReference>
<keyword id="KW-0560">Oxidoreductase</keyword>
<keyword id="KW-0575">Peroxidase</keyword>
<accession>Q5HGC7</accession>